<sequence length="31" mass="3715">MSDVIIPFLTSAVTAFIVAYLLDRWYIKRRR</sequence>
<organismHost>
    <name type="scientific">Bacillus subtilis</name>
    <dbReference type="NCBI Taxonomy" id="1423"/>
</organismHost>
<gene>
    <name type="primary">37</name>
</gene>
<reference key="1">
    <citation type="journal article" date="1998" name="Virology">
        <title>Genes and regulatory sites of the 'host-takeover module' in the terminal redundancy of Bacillus subtilis bacteriophage SPO1.</title>
        <authorList>
            <person name="Stewart C.R."/>
            <person name="Gaslightwala I."/>
            <person name="Hinata K."/>
            <person name="Krolikowski K.A."/>
            <person name="Needleman D.S."/>
            <person name="Peng A.S.-Y."/>
            <person name="Peterman M.A."/>
            <person name="Tobias A."/>
            <person name="Wei P."/>
        </authorList>
    </citation>
    <scope>NUCLEOTIDE SEQUENCE [GENOMIC DNA]</scope>
</reference>
<name>GP37_BPSP1</name>
<dbReference type="EMBL" id="AF031901">
    <property type="protein sequence ID" value="AAC29006.1"/>
    <property type="molecule type" value="Genomic_DNA"/>
</dbReference>
<dbReference type="RefSeq" id="YP_002300281.1">
    <property type="nucleotide sequence ID" value="NC_011421.1"/>
</dbReference>
<dbReference type="SMR" id="O48393"/>
<dbReference type="GeneID" id="7008994"/>
<dbReference type="KEGG" id="vg:7008994"/>
<accession>O48393</accession>
<protein>
    <recommendedName>
        <fullName>Putative gene 37 protein</fullName>
    </recommendedName>
</protein>
<feature type="chain" id="PRO_0000106143" description="Putative gene 37 protein">
    <location>
        <begin position="1"/>
        <end position="31"/>
    </location>
</feature>
<organism>
    <name type="scientific">Bacillus phage SP01</name>
    <name type="common">Bacteriophage SP01</name>
    <dbReference type="NCBI Taxonomy" id="2884427"/>
    <lineage>
        <taxon>Viruses</taxon>
        <taxon>Duplodnaviria</taxon>
        <taxon>Heunggongvirae</taxon>
        <taxon>Uroviricota</taxon>
        <taxon>Caudoviricetes</taxon>
        <taxon>Herelleviridae</taxon>
        <taxon>Spounavirinae</taxon>
        <taxon>Okubovirus</taxon>
        <taxon>Okubovirus SPO1</taxon>
    </lineage>
</organism>
<proteinExistence type="predicted"/>